<accession>Q9A502</accession>
<evidence type="ECO:0000255" key="1">
    <source>
        <dbReference type="HAMAP-Rule" id="MF_01719"/>
    </source>
</evidence>
<protein>
    <recommendedName>
        <fullName evidence="1">Methionine import ATP-binding protein MetN</fullName>
        <ecNumber evidence="1">7.4.2.11</ecNumber>
    </recommendedName>
</protein>
<comment type="function">
    <text evidence="1">Part of the ABC transporter complex MetNIQ involved in methionine import. Responsible for energy coupling to the transport system.</text>
</comment>
<comment type="catalytic activity">
    <reaction evidence="1">
        <text>L-methionine(out) + ATP + H2O = L-methionine(in) + ADP + phosphate + H(+)</text>
        <dbReference type="Rhea" id="RHEA:29779"/>
        <dbReference type="ChEBI" id="CHEBI:15377"/>
        <dbReference type="ChEBI" id="CHEBI:15378"/>
        <dbReference type="ChEBI" id="CHEBI:30616"/>
        <dbReference type="ChEBI" id="CHEBI:43474"/>
        <dbReference type="ChEBI" id="CHEBI:57844"/>
        <dbReference type="ChEBI" id="CHEBI:456216"/>
        <dbReference type="EC" id="7.4.2.11"/>
    </reaction>
</comment>
<comment type="catalytic activity">
    <reaction evidence="1">
        <text>D-methionine(out) + ATP + H2O = D-methionine(in) + ADP + phosphate + H(+)</text>
        <dbReference type="Rhea" id="RHEA:29767"/>
        <dbReference type="ChEBI" id="CHEBI:15377"/>
        <dbReference type="ChEBI" id="CHEBI:15378"/>
        <dbReference type="ChEBI" id="CHEBI:30616"/>
        <dbReference type="ChEBI" id="CHEBI:43474"/>
        <dbReference type="ChEBI" id="CHEBI:57932"/>
        <dbReference type="ChEBI" id="CHEBI:456216"/>
        <dbReference type="EC" id="7.4.2.11"/>
    </reaction>
</comment>
<comment type="subunit">
    <text evidence="1">The complex is composed of two ATP-binding proteins (MetN), two transmembrane proteins (MetI) and a solute-binding protein (MetQ).</text>
</comment>
<comment type="subcellular location">
    <subcellularLocation>
        <location evidence="1">Cell inner membrane</location>
        <topology evidence="1">Peripheral membrane protein</topology>
    </subcellularLocation>
</comment>
<comment type="similarity">
    <text evidence="1">Belongs to the ABC transporter superfamily. Methionine importer (TC 3.A.1.24) family.</text>
</comment>
<gene>
    <name evidence="1" type="primary">metN</name>
    <name type="ordered locus">CC_2669</name>
</gene>
<name>METN_CAUVC</name>
<feature type="chain" id="PRO_0000270277" description="Methionine import ATP-binding protein MetN">
    <location>
        <begin position="1"/>
        <end position="332"/>
    </location>
</feature>
<feature type="domain" description="ABC transporter" evidence="1">
    <location>
        <begin position="2"/>
        <end position="239"/>
    </location>
</feature>
<feature type="binding site" evidence="1">
    <location>
        <begin position="36"/>
        <end position="43"/>
    </location>
    <ligand>
        <name>ATP</name>
        <dbReference type="ChEBI" id="CHEBI:30616"/>
    </ligand>
</feature>
<organism>
    <name type="scientific">Caulobacter vibrioides (strain ATCC 19089 / CIP 103742 / CB 15)</name>
    <name type="common">Caulobacter crescentus</name>
    <dbReference type="NCBI Taxonomy" id="190650"/>
    <lineage>
        <taxon>Bacteria</taxon>
        <taxon>Pseudomonadati</taxon>
        <taxon>Pseudomonadota</taxon>
        <taxon>Alphaproteobacteria</taxon>
        <taxon>Caulobacterales</taxon>
        <taxon>Caulobacteraceae</taxon>
        <taxon>Caulobacter</taxon>
    </lineage>
</organism>
<sequence>MITFQDVSKTYAQGGHPALSGVSLSVKAGEVFGVIGASGAGKSTLIRLINGLETPSAGQVIVDGDDVAALGVAGLRALRRRVGMIFQHFNLLSGKTVAQNVAFPLKLAGRPAAEVKARTAELLERVGLSAHAGKYPAQLSGGQKQRVGIARALATNPKVLLCDEATSALDPETTEQILDLIAGLNRELGLTIVLITHEMDVVRRVCDRVAVLDAGRVVEEGAVEEVFLHPASDTARRFVREAEGDVTAAPGVGGRVVRLTFKGEATYKPVLGEVARATGVDYSILGGRIHRLRETPYGQLTLALTGGDVAAAIAQFQAAGVRVDALSGETAQ</sequence>
<keyword id="KW-0029">Amino-acid transport</keyword>
<keyword id="KW-0067">ATP-binding</keyword>
<keyword id="KW-0997">Cell inner membrane</keyword>
<keyword id="KW-1003">Cell membrane</keyword>
<keyword id="KW-0472">Membrane</keyword>
<keyword id="KW-0547">Nucleotide-binding</keyword>
<keyword id="KW-1185">Reference proteome</keyword>
<keyword id="KW-1278">Translocase</keyword>
<keyword id="KW-0813">Transport</keyword>
<reference key="1">
    <citation type="journal article" date="2001" name="Proc. Natl. Acad. Sci. U.S.A.">
        <title>Complete genome sequence of Caulobacter crescentus.</title>
        <authorList>
            <person name="Nierman W.C."/>
            <person name="Feldblyum T.V."/>
            <person name="Laub M.T."/>
            <person name="Paulsen I.T."/>
            <person name="Nelson K.E."/>
            <person name="Eisen J.A."/>
            <person name="Heidelberg J.F."/>
            <person name="Alley M.R.K."/>
            <person name="Ohta N."/>
            <person name="Maddock J.R."/>
            <person name="Potocka I."/>
            <person name="Nelson W.C."/>
            <person name="Newton A."/>
            <person name="Stephens C."/>
            <person name="Phadke N.D."/>
            <person name="Ely B."/>
            <person name="DeBoy R.T."/>
            <person name="Dodson R.J."/>
            <person name="Durkin A.S."/>
            <person name="Gwinn M.L."/>
            <person name="Haft D.H."/>
            <person name="Kolonay J.F."/>
            <person name="Smit J."/>
            <person name="Craven M.B."/>
            <person name="Khouri H.M."/>
            <person name="Shetty J."/>
            <person name="Berry K.J."/>
            <person name="Utterback T.R."/>
            <person name="Tran K."/>
            <person name="Wolf A.M."/>
            <person name="Vamathevan J.J."/>
            <person name="Ermolaeva M.D."/>
            <person name="White O."/>
            <person name="Salzberg S.L."/>
            <person name="Venter J.C."/>
            <person name="Shapiro L."/>
            <person name="Fraser C.M."/>
        </authorList>
    </citation>
    <scope>NUCLEOTIDE SEQUENCE [LARGE SCALE GENOMIC DNA]</scope>
    <source>
        <strain>ATCC 19089 / CIP 103742 / CB 15</strain>
    </source>
</reference>
<proteinExistence type="inferred from homology"/>
<dbReference type="EC" id="7.4.2.11" evidence="1"/>
<dbReference type="EMBL" id="AE005673">
    <property type="protein sequence ID" value="AAK24636.1"/>
    <property type="molecule type" value="Genomic_DNA"/>
</dbReference>
<dbReference type="PIR" id="H87579">
    <property type="entry name" value="H87579"/>
</dbReference>
<dbReference type="RefSeq" id="NP_421468.1">
    <property type="nucleotide sequence ID" value="NC_002696.2"/>
</dbReference>
<dbReference type="RefSeq" id="WP_010920519.1">
    <property type="nucleotide sequence ID" value="NC_002696.2"/>
</dbReference>
<dbReference type="SMR" id="Q9A502"/>
<dbReference type="STRING" id="190650.CC_2669"/>
<dbReference type="EnsemblBacteria" id="AAK24636">
    <property type="protein sequence ID" value="AAK24636"/>
    <property type="gene ID" value="CC_2669"/>
</dbReference>
<dbReference type="KEGG" id="ccr:CC_2669"/>
<dbReference type="PATRIC" id="fig|190650.5.peg.2680"/>
<dbReference type="eggNOG" id="COG1135">
    <property type="taxonomic scope" value="Bacteria"/>
</dbReference>
<dbReference type="HOGENOM" id="CLU_000604_1_3_5"/>
<dbReference type="BioCyc" id="CAULO:CC2669-MONOMER"/>
<dbReference type="Proteomes" id="UP000001816">
    <property type="component" value="Chromosome"/>
</dbReference>
<dbReference type="GO" id="GO:0005886">
    <property type="term" value="C:plasma membrane"/>
    <property type="evidence" value="ECO:0007669"/>
    <property type="project" value="UniProtKB-SubCell"/>
</dbReference>
<dbReference type="GO" id="GO:0033232">
    <property type="term" value="F:ABC-type D-methionine transporter activity"/>
    <property type="evidence" value="ECO:0007669"/>
    <property type="project" value="UniProtKB-EC"/>
</dbReference>
<dbReference type="GO" id="GO:0005524">
    <property type="term" value="F:ATP binding"/>
    <property type="evidence" value="ECO:0007669"/>
    <property type="project" value="UniProtKB-KW"/>
</dbReference>
<dbReference type="GO" id="GO:0016887">
    <property type="term" value="F:ATP hydrolysis activity"/>
    <property type="evidence" value="ECO:0007669"/>
    <property type="project" value="InterPro"/>
</dbReference>
<dbReference type="CDD" id="cd03258">
    <property type="entry name" value="ABC_MetN_methionine_transporter"/>
    <property type="match status" value="1"/>
</dbReference>
<dbReference type="FunFam" id="3.40.50.300:FF:000056">
    <property type="entry name" value="Cell division ATP-binding protein FtsE"/>
    <property type="match status" value="1"/>
</dbReference>
<dbReference type="Gene3D" id="3.30.70.260">
    <property type="match status" value="1"/>
</dbReference>
<dbReference type="Gene3D" id="3.40.50.300">
    <property type="entry name" value="P-loop containing nucleotide triphosphate hydrolases"/>
    <property type="match status" value="1"/>
</dbReference>
<dbReference type="InterPro" id="IPR003593">
    <property type="entry name" value="AAA+_ATPase"/>
</dbReference>
<dbReference type="InterPro" id="IPR003439">
    <property type="entry name" value="ABC_transporter-like_ATP-bd"/>
</dbReference>
<dbReference type="InterPro" id="IPR017871">
    <property type="entry name" value="ABC_transporter-like_CS"/>
</dbReference>
<dbReference type="InterPro" id="IPR045865">
    <property type="entry name" value="ACT-like_dom_sf"/>
</dbReference>
<dbReference type="InterPro" id="IPR041701">
    <property type="entry name" value="MetN_ABC"/>
</dbReference>
<dbReference type="InterPro" id="IPR050086">
    <property type="entry name" value="MetN_ABC_transporter-like"/>
</dbReference>
<dbReference type="InterPro" id="IPR018449">
    <property type="entry name" value="NIL_domain"/>
</dbReference>
<dbReference type="InterPro" id="IPR027417">
    <property type="entry name" value="P-loop_NTPase"/>
</dbReference>
<dbReference type="PANTHER" id="PTHR43166">
    <property type="entry name" value="AMINO ACID IMPORT ATP-BINDING PROTEIN"/>
    <property type="match status" value="1"/>
</dbReference>
<dbReference type="PANTHER" id="PTHR43166:SF30">
    <property type="entry name" value="METHIONINE IMPORT ATP-BINDING PROTEIN METN"/>
    <property type="match status" value="1"/>
</dbReference>
<dbReference type="Pfam" id="PF00005">
    <property type="entry name" value="ABC_tran"/>
    <property type="match status" value="1"/>
</dbReference>
<dbReference type="Pfam" id="PF09383">
    <property type="entry name" value="NIL"/>
    <property type="match status" value="1"/>
</dbReference>
<dbReference type="SMART" id="SM00382">
    <property type="entry name" value="AAA"/>
    <property type="match status" value="1"/>
</dbReference>
<dbReference type="SMART" id="SM00930">
    <property type="entry name" value="NIL"/>
    <property type="match status" value="1"/>
</dbReference>
<dbReference type="SUPFAM" id="SSF55021">
    <property type="entry name" value="ACT-like"/>
    <property type="match status" value="1"/>
</dbReference>
<dbReference type="SUPFAM" id="SSF52540">
    <property type="entry name" value="P-loop containing nucleoside triphosphate hydrolases"/>
    <property type="match status" value="1"/>
</dbReference>
<dbReference type="PROSITE" id="PS00211">
    <property type="entry name" value="ABC_TRANSPORTER_1"/>
    <property type="match status" value="1"/>
</dbReference>
<dbReference type="PROSITE" id="PS50893">
    <property type="entry name" value="ABC_TRANSPORTER_2"/>
    <property type="match status" value="1"/>
</dbReference>
<dbReference type="PROSITE" id="PS51264">
    <property type="entry name" value="METN"/>
    <property type="match status" value="1"/>
</dbReference>